<proteinExistence type="inferred from homology"/>
<feature type="chain" id="PRO_0000351704" description="L-rhamnonate dehydratase">
    <location>
        <begin position="1"/>
        <end position="405"/>
    </location>
</feature>
<feature type="active site" description="Proton acceptor" evidence="1">
    <location>
        <position position="329"/>
    </location>
</feature>
<feature type="binding site" evidence="1">
    <location>
        <position position="33"/>
    </location>
    <ligand>
        <name>substrate</name>
    </ligand>
</feature>
<feature type="binding site" evidence="1">
    <location>
        <position position="59"/>
    </location>
    <ligand>
        <name>substrate</name>
    </ligand>
</feature>
<feature type="binding site" evidence="1">
    <location>
        <position position="226"/>
    </location>
    <ligand>
        <name>Mg(2+)</name>
        <dbReference type="ChEBI" id="CHEBI:18420"/>
    </ligand>
</feature>
<feature type="binding site" evidence="1">
    <location>
        <position position="252"/>
    </location>
    <ligand>
        <name>Mg(2+)</name>
        <dbReference type="ChEBI" id="CHEBI:18420"/>
    </ligand>
</feature>
<feature type="binding site" evidence="1">
    <location>
        <position position="280"/>
    </location>
    <ligand>
        <name>Mg(2+)</name>
        <dbReference type="ChEBI" id="CHEBI:18420"/>
    </ligand>
</feature>
<feature type="binding site" evidence="1">
    <location>
        <position position="349"/>
    </location>
    <ligand>
        <name>substrate</name>
    </ligand>
</feature>
<feature type="site" description="Increases basicity of active site His" evidence="1">
    <location>
        <position position="302"/>
    </location>
</feature>
<feature type="site" description="Transition state stabilizer" evidence="1">
    <location>
        <position position="349"/>
    </location>
</feature>
<organism>
    <name type="scientific">Salmonella paratyphi A (strain ATCC 9150 / SARB42)</name>
    <dbReference type="NCBI Taxonomy" id="295319"/>
    <lineage>
        <taxon>Bacteria</taxon>
        <taxon>Pseudomonadati</taxon>
        <taxon>Pseudomonadota</taxon>
        <taxon>Gammaproteobacteria</taxon>
        <taxon>Enterobacterales</taxon>
        <taxon>Enterobacteriaceae</taxon>
        <taxon>Salmonella</taxon>
    </lineage>
</organism>
<sequence length="405" mass="44577">MENIMTLPKIKHVRAWFIGGATAEKGAGGGDYHDQGGNHWIDDHIATPMSKYRDYEQSRQSFGINVLGTLIVEVEAENGQTGFAVSTAGEMGCFIVEKHLNRFIEGKCVSDIKLIHDQMLGATMYYSGSGGLVMNTISCVDLALWDLFGKVVGLPVYKLLGGAVRDEIQFYATGARPDLAKEMGFIGGKMPAHWGPHDGDAGIRKDAAMVADMREKCGPDFWLMLDCWMSQDVNYATKLAHACAPFNLKWIEECLPPQQYEGYRELKRNAPAGMMVTSGEHHGTLQSFRTLAETGIDIMQPDVGWCGGLTTLVEIAALAKSRGQLVVPHGSSVYSHHAVITFTNTPFSEFLMTSPDCSTLRPQFDPILLDEPVPVNGRIHKSVLDKPGFGVELNRDCHLKRPYSH</sequence>
<name>RHMD_SALPA</name>
<evidence type="ECO:0000255" key="1">
    <source>
        <dbReference type="HAMAP-Rule" id="MF_01288"/>
    </source>
</evidence>
<reference key="1">
    <citation type="journal article" date="2004" name="Nat. Genet.">
        <title>Comparison of genome degradation in Paratyphi A and Typhi, human-restricted serovars of Salmonella enterica that cause typhoid.</title>
        <authorList>
            <person name="McClelland M."/>
            <person name="Sanderson K.E."/>
            <person name="Clifton S.W."/>
            <person name="Latreille P."/>
            <person name="Porwollik S."/>
            <person name="Sabo A."/>
            <person name="Meyer R."/>
            <person name="Bieri T."/>
            <person name="Ozersky P."/>
            <person name="McLellan M."/>
            <person name="Harkins C.R."/>
            <person name="Wang C."/>
            <person name="Nguyen C."/>
            <person name="Berghoff A."/>
            <person name="Elliott G."/>
            <person name="Kohlberg S."/>
            <person name="Strong C."/>
            <person name="Du F."/>
            <person name="Carter J."/>
            <person name="Kremizki C."/>
            <person name="Layman D."/>
            <person name="Leonard S."/>
            <person name="Sun H."/>
            <person name="Fulton L."/>
            <person name="Nash W."/>
            <person name="Miner T."/>
            <person name="Minx P."/>
            <person name="Delehaunty K."/>
            <person name="Fronick C."/>
            <person name="Magrini V."/>
            <person name="Nhan M."/>
            <person name="Warren W."/>
            <person name="Florea L."/>
            <person name="Spieth J."/>
            <person name="Wilson R.K."/>
        </authorList>
    </citation>
    <scope>NUCLEOTIDE SEQUENCE [LARGE SCALE GENOMIC DNA]</scope>
    <source>
        <strain>ATCC 9150 / SARB42</strain>
    </source>
</reference>
<keyword id="KW-0456">Lyase</keyword>
<keyword id="KW-0460">Magnesium</keyword>
<keyword id="KW-0479">Metal-binding</keyword>
<accession>Q5PIM9</accession>
<protein>
    <recommendedName>
        <fullName evidence="1">L-rhamnonate dehydratase</fullName>
        <shortName evidence="1">RhamD</shortName>
        <ecNumber evidence="1">4.2.1.90</ecNumber>
    </recommendedName>
</protein>
<comment type="function">
    <text evidence="1">Catalyzes the dehydration of L-rhamnonate to 2-keto-3-deoxy-L-rhamnonate (KDR).</text>
</comment>
<comment type="catalytic activity">
    <reaction evidence="1">
        <text>L-rhamnonate = 2-dehydro-3-deoxy-L-rhamnonate + H2O</text>
        <dbReference type="Rhea" id="RHEA:23080"/>
        <dbReference type="ChEBI" id="CHEBI:15377"/>
        <dbReference type="ChEBI" id="CHEBI:58118"/>
        <dbReference type="ChEBI" id="CHEBI:58371"/>
        <dbReference type="EC" id="4.2.1.90"/>
    </reaction>
</comment>
<comment type="cofactor">
    <cofactor evidence="1">
        <name>Mg(2+)</name>
        <dbReference type="ChEBI" id="CHEBI:18420"/>
    </cofactor>
    <text evidence="1">Binds 1 Mg(2+) ion per subunit.</text>
</comment>
<comment type="subunit">
    <text evidence="1">Homooctamer; tetramer of dimers.</text>
</comment>
<comment type="miscellaneous">
    <text evidence="1">Reaction proceeds via a syn dehydration.</text>
</comment>
<comment type="similarity">
    <text evidence="1">Belongs to the mandelate racemase/muconate lactonizing enzyme family. RhamD subfamily.</text>
</comment>
<gene>
    <name evidence="1" type="primary">rhmD</name>
    <name type="ordered locus">SPA0572</name>
</gene>
<dbReference type="EC" id="4.2.1.90" evidence="1"/>
<dbReference type="EMBL" id="CP000026">
    <property type="protein sequence ID" value="AAV76574.1"/>
    <property type="molecule type" value="Genomic_DNA"/>
</dbReference>
<dbReference type="SMR" id="Q5PIM9"/>
<dbReference type="KEGG" id="spt:SPA0572"/>
<dbReference type="HOGENOM" id="CLU_030273_1_0_6"/>
<dbReference type="Proteomes" id="UP000008185">
    <property type="component" value="Chromosome"/>
</dbReference>
<dbReference type="GO" id="GO:0050032">
    <property type="term" value="F:L-rhamnonate dehydratase activity"/>
    <property type="evidence" value="ECO:0007669"/>
    <property type="project" value="UniProtKB-UniRule"/>
</dbReference>
<dbReference type="GO" id="GO:0000287">
    <property type="term" value="F:magnesium ion binding"/>
    <property type="evidence" value="ECO:0007669"/>
    <property type="project" value="UniProtKB-UniRule"/>
</dbReference>
<dbReference type="GO" id="GO:0009063">
    <property type="term" value="P:amino acid catabolic process"/>
    <property type="evidence" value="ECO:0007669"/>
    <property type="project" value="InterPro"/>
</dbReference>
<dbReference type="GO" id="GO:0016052">
    <property type="term" value="P:carbohydrate catabolic process"/>
    <property type="evidence" value="ECO:0007669"/>
    <property type="project" value="TreeGrafter"/>
</dbReference>
<dbReference type="CDD" id="cd03327">
    <property type="entry name" value="MR_like_2"/>
    <property type="match status" value="1"/>
</dbReference>
<dbReference type="FunFam" id="3.30.390.10:FF:000007">
    <property type="entry name" value="L-rhamnonate dehydratase"/>
    <property type="match status" value="1"/>
</dbReference>
<dbReference type="FunFam" id="3.20.20.120:FF:000005">
    <property type="entry name" value="Putative L-rhamnonate dehydratase"/>
    <property type="match status" value="1"/>
</dbReference>
<dbReference type="Gene3D" id="3.20.20.120">
    <property type="entry name" value="Enolase-like C-terminal domain"/>
    <property type="match status" value="1"/>
</dbReference>
<dbReference type="Gene3D" id="3.30.390.10">
    <property type="entry name" value="Enolase-like, N-terminal domain"/>
    <property type="match status" value="1"/>
</dbReference>
<dbReference type="HAMAP" id="MF_01288">
    <property type="entry name" value="Rhamnon_dehydrat"/>
    <property type="match status" value="1"/>
</dbReference>
<dbReference type="InterPro" id="IPR036849">
    <property type="entry name" value="Enolase-like_C_sf"/>
</dbReference>
<dbReference type="InterPro" id="IPR029017">
    <property type="entry name" value="Enolase-like_N"/>
</dbReference>
<dbReference type="InterPro" id="IPR029065">
    <property type="entry name" value="Enolase_C-like"/>
</dbReference>
<dbReference type="InterPro" id="IPR023444">
    <property type="entry name" value="L-Rhamnon_dehydrat"/>
</dbReference>
<dbReference type="InterPro" id="IPR018110">
    <property type="entry name" value="Mandel_Rmase/mucon_lact_enz_CS"/>
</dbReference>
<dbReference type="InterPro" id="IPR013342">
    <property type="entry name" value="Mandelate_racemase_C"/>
</dbReference>
<dbReference type="InterPro" id="IPR013341">
    <property type="entry name" value="Mandelate_racemase_N_dom"/>
</dbReference>
<dbReference type="InterPro" id="IPR046945">
    <property type="entry name" value="RHMD-like"/>
</dbReference>
<dbReference type="NCBIfam" id="NF011968">
    <property type="entry name" value="PRK15440.1"/>
    <property type="match status" value="1"/>
</dbReference>
<dbReference type="PANTHER" id="PTHR13794">
    <property type="entry name" value="ENOLASE SUPERFAMILY, MANDELATE RACEMASE"/>
    <property type="match status" value="1"/>
</dbReference>
<dbReference type="PANTHER" id="PTHR13794:SF58">
    <property type="entry name" value="MITOCHONDRIAL ENOLASE SUPERFAMILY MEMBER 1"/>
    <property type="match status" value="1"/>
</dbReference>
<dbReference type="Pfam" id="PF13378">
    <property type="entry name" value="MR_MLE_C"/>
    <property type="match status" value="1"/>
</dbReference>
<dbReference type="Pfam" id="PF02746">
    <property type="entry name" value="MR_MLE_N"/>
    <property type="match status" value="1"/>
</dbReference>
<dbReference type="SFLD" id="SFLDG00179">
    <property type="entry name" value="mandelate_racemase"/>
    <property type="match status" value="1"/>
</dbReference>
<dbReference type="SFLD" id="SFLDF00006">
    <property type="entry name" value="rhamnonate_dehydratase"/>
    <property type="match status" value="1"/>
</dbReference>
<dbReference type="SMART" id="SM00922">
    <property type="entry name" value="MR_MLE"/>
    <property type="match status" value="1"/>
</dbReference>
<dbReference type="SUPFAM" id="SSF51604">
    <property type="entry name" value="Enolase C-terminal domain-like"/>
    <property type="match status" value="1"/>
</dbReference>
<dbReference type="SUPFAM" id="SSF54826">
    <property type="entry name" value="Enolase N-terminal domain-like"/>
    <property type="match status" value="1"/>
</dbReference>
<dbReference type="PROSITE" id="PS00908">
    <property type="entry name" value="MR_MLE_1"/>
    <property type="match status" value="1"/>
</dbReference>